<organism>
    <name type="scientific">Nymphaea alba</name>
    <name type="common">White water-lily</name>
    <name type="synonym">Castalia alba</name>
    <dbReference type="NCBI Taxonomy" id="34301"/>
    <lineage>
        <taxon>Eukaryota</taxon>
        <taxon>Viridiplantae</taxon>
        <taxon>Streptophyta</taxon>
        <taxon>Embryophyta</taxon>
        <taxon>Tracheophyta</taxon>
        <taxon>Spermatophyta</taxon>
        <taxon>Magnoliopsida</taxon>
        <taxon>Nymphaeales</taxon>
        <taxon>Nymphaeaceae</taxon>
        <taxon>Nymphaea</taxon>
    </lineage>
</organism>
<gene>
    <name evidence="1" type="primary">petN</name>
</gene>
<accession>Q6EW55</accession>
<proteinExistence type="inferred from homology"/>
<reference key="1">
    <citation type="journal article" date="2004" name="Mol. Biol. Evol.">
        <title>The chloroplast genome of Nymphaea alba: whole-genome analyses and the problem of identifying the most basal angiosperm.</title>
        <authorList>
            <person name="Goremykin V.V."/>
            <person name="Hirsch-Ernst K.I."/>
            <person name="Woelfl S."/>
            <person name="Hellwig F.H."/>
        </authorList>
    </citation>
    <scope>NUCLEOTIDE SEQUENCE [LARGE SCALE GENOMIC DNA]</scope>
</reference>
<evidence type="ECO:0000255" key="1">
    <source>
        <dbReference type="HAMAP-Rule" id="MF_00395"/>
    </source>
</evidence>
<evidence type="ECO:0000305" key="2"/>
<keyword id="KW-0150">Chloroplast</keyword>
<keyword id="KW-0249">Electron transport</keyword>
<keyword id="KW-0472">Membrane</keyword>
<keyword id="KW-0602">Photosynthesis</keyword>
<keyword id="KW-0934">Plastid</keyword>
<keyword id="KW-0793">Thylakoid</keyword>
<keyword id="KW-0812">Transmembrane</keyword>
<keyword id="KW-1133">Transmembrane helix</keyword>
<keyword id="KW-0813">Transport</keyword>
<geneLocation type="chloroplast"/>
<protein>
    <recommendedName>
        <fullName evidence="1">Cytochrome b6-f complex subunit 8</fullName>
    </recommendedName>
    <alternativeName>
        <fullName evidence="1">Cytochrome b6-f complex subunit PetN</fullName>
    </alternativeName>
    <alternativeName>
        <fullName evidence="1">Cytochrome b6-f complex subunit VIII</fullName>
    </alternativeName>
</protein>
<name>PETN_NYMAL</name>
<feature type="chain" id="PRO_0000217117" description="Cytochrome b6-f complex subunit 8">
    <location>
        <begin position="1"/>
        <end position="29"/>
    </location>
</feature>
<feature type="transmembrane region" description="Helical" evidence="1">
    <location>
        <begin position="3"/>
        <end position="23"/>
    </location>
</feature>
<dbReference type="EMBL" id="AJ627251">
    <property type="protein sequence ID" value="CAF28586.1"/>
    <property type="status" value="ALT_INIT"/>
    <property type="molecule type" value="Genomic_DNA"/>
</dbReference>
<dbReference type="RefSeq" id="YP_053148.2">
    <property type="nucleotide sequence ID" value="NC_006050.1"/>
</dbReference>
<dbReference type="SMR" id="Q6EW55"/>
<dbReference type="GeneID" id="2896221"/>
<dbReference type="GO" id="GO:0009535">
    <property type="term" value="C:chloroplast thylakoid membrane"/>
    <property type="evidence" value="ECO:0007669"/>
    <property type="project" value="UniProtKB-SubCell"/>
</dbReference>
<dbReference type="GO" id="GO:0009512">
    <property type="term" value="C:cytochrome b6f complex"/>
    <property type="evidence" value="ECO:0007669"/>
    <property type="project" value="InterPro"/>
</dbReference>
<dbReference type="GO" id="GO:0045158">
    <property type="term" value="F:electron transporter, transferring electrons within cytochrome b6/f complex of photosystem II activity"/>
    <property type="evidence" value="ECO:0007669"/>
    <property type="project" value="InterPro"/>
</dbReference>
<dbReference type="GO" id="GO:0017004">
    <property type="term" value="P:cytochrome complex assembly"/>
    <property type="evidence" value="ECO:0007669"/>
    <property type="project" value="UniProtKB-UniRule"/>
</dbReference>
<dbReference type="GO" id="GO:0015979">
    <property type="term" value="P:photosynthesis"/>
    <property type="evidence" value="ECO:0007669"/>
    <property type="project" value="UniProtKB-KW"/>
</dbReference>
<dbReference type="HAMAP" id="MF_00395">
    <property type="entry name" value="Cytb6_f_PetN"/>
    <property type="match status" value="1"/>
</dbReference>
<dbReference type="InterPro" id="IPR036143">
    <property type="entry name" value="Cytochr_b6-f_cplx_su8_sf"/>
</dbReference>
<dbReference type="InterPro" id="IPR005497">
    <property type="entry name" value="Cytochrome_b6-f_cplx_su8"/>
</dbReference>
<dbReference type="Pfam" id="PF03742">
    <property type="entry name" value="PetN"/>
    <property type="match status" value="1"/>
</dbReference>
<dbReference type="SUPFAM" id="SSF103451">
    <property type="entry name" value="PetN subunit of the cytochrome b6f complex"/>
    <property type="match status" value="1"/>
</dbReference>
<sequence length="29" mass="3170">MDIVSLAWAALMVVFTFSLSLVVWGRSGL</sequence>
<comment type="function">
    <text evidence="1">Component of the cytochrome b6-f complex, which mediates electron transfer between photosystem II (PSII) and photosystem I (PSI), cyclic electron flow around PSI, and state transitions.</text>
</comment>
<comment type="subunit">
    <text evidence="1">The 4 large subunits of the cytochrome b6-f complex are cytochrome b6, subunit IV (17 kDa polypeptide, PetD), cytochrome f and the Rieske protein, while the 4 small subunits are PetG, PetL, PetM and PetN. The complex functions as a dimer.</text>
</comment>
<comment type="subcellular location">
    <subcellularLocation>
        <location evidence="1">Plastid</location>
        <location evidence="1">Chloroplast thylakoid membrane</location>
        <topology evidence="1">Single-pass membrane protein</topology>
    </subcellularLocation>
</comment>
<comment type="similarity">
    <text evidence="1">Belongs to the PetN family.</text>
</comment>
<comment type="sequence caution" evidence="2">
    <conflict type="erroneous initiation">
        <sequence resource="EMBL-CDS" id="CAF28586"/>
    </conflict>
</comment>